<accession>A7GTP5</accession>
<evidence type="ECO:0000255" key="1">
    <source>
        <dbReference type="HAMAP-Rule" id="MF_00823"/>
    </source>
</evidence>
<evidence type="ECO:0000255" key="2">
    <source>
        <dbReference type="PROSITE-ProRule" id="PRU01137"/>
    </source>
</evidence>
<keyword id="KW-0067">ATP-binding</keyword>
<keyword id="KW-0963">Cytoplasm</keyword>
<keyword id="KW-0275">Fatty acid biosynthesis</keyword>
<keyword id="KW-0276">Fatty acid metabolism</keyword>
<keyword id="KW-0444">Lipid biosynthesis</keyword>
<keyword id="KW-0443">Lipid metabolism</keyword>
<keyword id="KW-0547">Nucleotide-binding</keyword>
<keyword id="KW-0808">Transferase</keyword>
<reference key="1">
    <citation type="journal article" date="2008" name="Chem. Biol. Interact.">
        <title>Extending the Bacillus cereus group genomics to putative food-borne pathogens of different toxicity.</title>
        <authorList>
            <person name="Lapidus A."/>
            <person name="Goltsman E."/>
            <person name="Auger S."/>
            <person name="Galleron N."/>
            <person name="Segurens B."/>
            <person name="Dossat C."/>
            <person name="Land M.L."/>
            <person name="Broussolle V."/>
            <person name="Brillard J."/>
            <person name="Guinebretiere M.-H."/>
            <person name="Sanchis V."/>
            <person name="Nguen-the C."/>
            <person name="Lereclus D."/>
            <person name="Richardson P."/>
            <person name="Wincker P."/>
            <person name="Weissenbach J."/>
            <person name="Ehrlich S.D."/>
            <person name="Sorokin A."/>
        </authorList>
    </citation>
    <scope>NUCLEOTIDE SEQUENCE [LARGE SCALE GENOMIC DNA]</scope>
    <source>
        <strain>DSM 22905 / CIP 110041 / 391-98 / NVH 391-98</strain>
    </source>
</reference>
<dbReference type="EC" id="2.1.3.15" evidence="1"/>
<dbReference type="EMBL" id="CP000764">
    <property type="protein sequence ID" value="ABS23503.1"/>
    <property type="molecule type" value="Genomic_DNA"/>
</dbReference>
<dbReference type="RefSeq" id="WP_012095744.1">
    <property type="nucleotide sequence ID" value="NC_009674.1"/>
</dbReference>
<dbReference type="SMR" id="A7GTP5"/>
<dbReference type="STRING" id="315749.Bcer98_3284"/>
<dbReference type="GeneID" id="33898529"/>
<dbReference type="KEGG" id="bcy:Bcer98_3284"/>
<dbReference type="eggNOG" id="COG0825">
    <property type="taxonomic scope" value="Bacteria"/>
</dbReference>
<dbReference type="HOGENOM" id="CLU_015486_0_2_9"/>
<dbReference type="OrthoDB" id="9808023at2"/>
<dbReference type="UniPathway" id="UPA00655">
    <property type="reaction ID" value="UER00711"/>
</dbReference>
<dbReference type="Proteomes" id="UP000002300">
    <property type="component" value="Chromosome"/>
</dbReference>
<dbReference type="GO" id="GO:0009317">
    <property type="term" value="C:acetyl-CoA carboxylase complex"/>
    <property type="evidence" value="ECO:0007669"/>
    <property type="project" value="InterPro"/>
</dbReference>
<dbReference type="GO" id="GO:0003989">
    <property type="term" value="F:acetyl-CoA carboxylase activity"/>
    <property type="evidence" value="ECO:0007669"/>
    <property type="project" value="InterPro"/>
</dbReference>
<dbReference type="GO" id="GO:0005524">
    <property type="term" value="F:ATP binding"/>
    <property type="evidence" value="ECO:0007669"/>
    <property type="project" value="UniProtKB-KW"/>
</dbReference>
<dbReference type="GO" id="GO:0016743">
    <property type="term" value="F:carboxyl- or carbamoyltransferase activity"/>
    <property type="evidence" value="ECO:0007669"/>
    <property type="project" value="UniProtKB-UniRule"/>
</dbReference>
<dbReference type="GO" id="GO:0006633">
    <property type="term" value="P:fatty acid biosynthetic process"/>
    <property type="evidence" value="ECO:0007669"/>
    <property type="project" value="UniProtKB-KW"/>
</dbReference>
<dbReference type="GO" id="GO:2001295">
    <property type="term" value="P:malonyl-CoA biosynthetic process"/>
    <property type="evidence" value="ECO:0007669"/>
    <property type="project" value="UniProtKB-UniRule"/>
</dbReference>
<dbReference type="Gene3D" id="3.90.226.10">
    <property type="entry name" value="2-enoyl-CoA Hydratase, Chain A, domain 1"/>
    <property type="match status" value="1"/>
</dbReference>
<dbReference type="HAMAP" id="MF_00823">
    <property type="entry name" value="AcetylCoA_CT_alpha"/>
    <property type="match status" value="1"/>
</dbReference>
<dbReference type="InterPro" id="IPR001095">
    <property type="entry name" value="Acetyl_CoA_COase_a_su"/>
</dbReference>
<dbReference type="InterPro" id="IPR029045">
    <property type="entry name" value="ClpP/crotonase-like_dom_sf"/>
</dbReference>
<dbReference type="InterPro" id="IPR011763">
    <property type="entry name" value="COA_CT_C"/>
</dbReference>
<dbReference type="NCBIfam" id="TIGR00513">
    <property type="entry name" value="accA"/>
    <property type="match status" value="1"/>
</dbReference>
<dbReference type="NCBIfam" id="NF041504">
    <property type="entry name" value="AccA_sub"/>
    <property type="match status" value="1"/>
</dbReference>
<dbReference type="NCBIfam" id="NF004344">
    <property type="entry name" value="PRK05724.1"/>
    <property type="match status" value="1"/>
</dbReference>
<dbReference type="PANTHER" id="PTHR42853">
    <property type="entry name" value="ACETYL-COENZYME A CARBOXYLASE CARBOXYL TRANSFERASE SUBUNIT ALPHA"/>
    <property type="match status" value="1"/>
</dbReference>
<dbReference type="PANTHER" id="PTHR42853:SF3">
    <property type="entry name" value="ACETYL-COENZYME A CARBOXYLASE CARBOXYL TRANSFERASE SUBUNIT ALPHA, CHLOROPLASTIC"/>
    <property type="match status" value="1"/>
</dbReference>
<dbReference type="Pfam" id="PF03255">
    <property type="entry name" value="ACCA"/>
    <property type="match status" value="1"/>
</dbReference>
<dbReference type="PRINTS" id="PR01069">
    <property type="entry name" value="ACCCTRFRASEA"/>
</dbReference>
<dbReference type="SUPFAM" id="SSF52096">
    <property type="entry name" value="ClpP/crotonase"/>
    <property type="match status" value="1"/>
</dbReference>
<dbReference type="PROSITE" id="PS50989">
    <property type="entry name" value="COA_CT_CTER"/>
    <property type="match status" value="1"/>
</dbReference>
<protein>
    <recommendedName>
        <fullName evidence="1">Acetyl-coenzyme A carboxylase carboxyl transferase subunit alpha</fullName>
        <shortName evidence="1">ACCase subunit alpha</shortName>
        <shortName evidence="1">Acetyl-CoA carboxylase carboxyltransferase subunit alpha</shortName>
        <ecNumber evidence="1">2.1.3.15</ecNumber>
    </recommendedName>
</protein>
<comment type="function">
    <text evidence="1">Component of the acetyl coenzyme A carboxylase (ACC) complex. First, biotin carboxylase catalyzes the carboxylation of biotin on its carrier protein (BCCP) and then the CO(2) group is transferred by the carboxyltransferase to acetyl-CoA to form malonyl-CoA.</text>
</comment>
<comment type="catalytic activity">
    <reaction evidence="1">
        <text>N(6)-carboxybiotinyl-L-lysyl-[protein] + acetyl-CoA = N(6)-biotinyl-L-lysyl-[protein] + malonyl-CoA</text>
        <dbReference type="Rhea" id="RHEA:54728"/>
        <dbReference type="Rhea" id="RHEA-COMP:10505"/>
        <dbReference type="Rhea" id="RHEA-COMP:10506"/>
        <dbReference type="ChEBI" id="CHEBI:57288"/>
        <dbReference type="ChEBI" id="CHEBI:57384"/>
        <dbReference type="ChEBI" id="CHEBI:83144"/>
        <dbReference type="ChEBI" id="CHEBI:83145"/>
        <dbReference type="EC" id="2.1.3.15"/>
    </reaction>
</comment>
<comment type="pathway">
    <text evidence="1">Lipid metabolism; malonyl-CoA biosynthesis; malonyl-CoA from acetyl-CoA: step 1/1.</text>
</comment>
<comment type="subunit">
    <text evidence="1">Acetyl-CoA carboxylase is a heterohexamer composed of biotin carboxyl carrier protein (AccB), biotin carboxylase (AccC) and two subunits each of ACCase subunit alpha (AccA) and ACCase subunit beta (AccD).</text>
</comment>
<comment type="subcellular location">
    <subcellularLocation>
        <location evidence="1">Cytoplasm</location>
    </subcellularLocation>
</comment>
<comment type="similarity">
    <text evidence="1">Belongs to the AccA family.</text>
</comment>
<proteinExistence type="inferred from homology"/>
<name>ACCA_BACCN</name>
<organism>
    <name type="scientific">Bacillus cytotoxicus (strain DSM 22905 / CIP 110041 / 391-98 / NVH 391-98)</name>
    <dbReference type="NCBI Taxonomy" id="315749"/>
    <lineage>
        <taxon>Bacteria</taxon>
        <taxon>Bacillati</taxon>
        <taxon>Bacillota</taxon>
        <taxon>Bacilli</taxon>
        <taxon>Bacillales</taxon>
        <taxon>Bacillaceae</taxon>
        <taxon>Bacillus</taxon>
        <taxon>Bacillus cereus group</taxon>
    </lineage>
</organism>
<sequence>MAELEFEKPVVELRNKIRELKEYTKHSQMDFSEEIRILEDKLENLEEEIYGNMKVWDRVQIARHAERPTTLDYIEHLFTDFFECHGDRFFGDDAAIVGGIAKYNGMPVTVIGHQRGKDTKENIRRNFGMPHPEGYRKALRLMKQAEKFNRPIICFIDTKGAYPGKAAEERGQSEAIARNLFEMAGLTVPVICIVIGEGGSGGALGLGVGDYIYMLENSTYSVISPEGAATILWKDATKARDAAEALKITAADLKELGVIDEIIPESRGGAHRNILKQSENINVVLQKTFEQLSGISKDELIEKRYEKYMKIGQVSFSNASIWVK</sequence>
<feature type="chain" id="PRO_1000083918" description="Acetyl-coenzyme A carboxylase carboxyl transferase subunit alpha">
    <location>
        <begin position="1"/>
        <end position="324"/>
    </location>
</feature>
<feature type="domain" description="CoA carboxyltransferase C-terminal" evidence="2">
    <location>
        <begin position="37"/>
        <end position="291"/>
    </location>
</feature>
<gene>
    <name evidence="1" type="primary">accA</name>
    <name type="ordered locus">Bcer98_3284</name>
</gene>